<proteinExistence type="inferred from homology"/>
<sequence length="635" mass="70891">MTLRSPVEFQDQFDVIVVGAGHAGCEAALATARLGCRTLLLTLNLDRIAWQPCNPAVGGPAKSQLTHEVDALGGEIGKMADRTYLQKRVLNISRGPAVWALRAQTDKREYAAVMKNIVENQPNLSIREGMVTDLVLGDNDEIQGVQTYFGACFGAQSVVITTGTFLGGKIWIGNKSMPAGRAGEFAAVGLTETLNELGFETGRLKTGTPARVDRRSVDYDKLEPQPPDEQVSWFSFDPEVWVEREQMNCYLTRTTAKTHQLIKDNLHLSPIYGGFIDSKGPRYCPSIEDKIVRFADKESHQIFIEPEGRDIPELYIQGFSTGLPENVQLAMLQTLPGLENCVMLRPAYAVEYDFLPATQCYPSLMTKKVAGLFCAGQINGTTGYEEAAAQGLVAGINAARHCQGKSLIIFSREGSYLGTLIDDLCTKDLREPYRMLTSRSEYRLILRSDNADQRLTPLGREIGLIDDRRWDLFQTKQANITAEKERLYSTRIKEQDAVGKEIVDYTQQKIKGSIVLAELLRRPGFHYPDLEKFQLGNEELKPEEKTSVEIEIKYSGYIKRQQTQIEQVSRHSQKRLPPGLNYMAIETLSMEAREKLTQFQPLTIGQAGRIGGVNPADINALLVYLETQLRRSVSP</sequence>
<organism>
    <name type="scientific">Synechocystis sp. (strain ATCC 27184 / PCC 6803 / Kazusa)</name>
    <dbReference type="NCBI Taxonomy" id="1111708"/>
    <lineage>
        <taxon>Bacteria</taxon>
        <taxon>Bacillati</taxon>
        <taxon>Cyanobacteriota</taxon>
        <taxon>Cyanophyceae</taxon>
        <taxon>Synechococcales</taxon>
        <taxon>Merismopediaceae</taxon>
        <taxon>Synechocystis</taxon>
    </lineage>
</organism>
<dbReference type="EMBL" id="BA000022">
    <property type="protein sequence ID" value="BAA10223.1"/>
    <property type="molecule type" value="Genomic_DNA"/>
</dbReference>
<dbReference type="PIR" id="S76371">
    <property type="entry name" value="S76371"/>
</dbReference>
<dbReference type="SMR" id="Q55694"/>
<dbReference type="FunCoup" id="Q55694">
    <property type="interactions" value="498"/>
</dbReference>
<dbReference type="STRING" id="1148.gene:10499722"/>
<dbReference type="PaxDb" id="1148-1001595"/>
<dbReference type="EnsemblBacteria" id="BAA10223">
    <property type="protein sequence ID" value="BAA10223"/>
    <property type="gene ID" value="BAA10223"/>
</dbReference>
<dbReference type="KEGG" id="syn:sll0202"/>
<dbReference type="eggNOG" id="COG0445">
    <property type="taxonomic scope" value="Bacteria"/>
</dbReference>
<dbReference type="InParanoid" id="Q55694"/>
<dbReference type="PhylomeDB" id="Q55694"/>
<dbReference type="Proteomes" id="UP000001425">
    <property type="component" value="Chromosome"/>
</dbReference>
<dbReference type="GO" id="GO:0005737">
    <property type="term" value="C:cytoplasm"/>
    <property type="evidence" value="ECO:0007669"/>
    <property type="project" value="UniProtKB-SubCell"/>
</dbReference>
<dbReference type="GO" id="GO:0050660">
    <property type="term" value="F:flavin adenine dinucleotide binding"/>
    <property type="evidence" value="ECO:0000318"/>
    <property type="project" value="GO_Central"/>
</dbReference>
<dbReference type="GO" id="GO:0030488">
    <property type="term" value="P:tRNA methylation"/>
    <property type="evidence" value="ECO:0000318"/>
    <property type="project" value="GO_Central"/>
</dbReference>
<dbReference type="GO" id="GO:0002098">
    <property type="term" value="P:tRNA wobble uridine modification"/>
    <property type="evidence" value="ECO:0000318"/>
    <property type="project" value="GO_Central"/>
</dbReference>
<dbReference type="FunFam" id="1.10.10.1800:FF:000001">
    <property type="entry name" value="tRNA uridine 5-carboxymethylaminomethyl modification enzyme MnmG"/>
    <property type="match status" value="1"/>
</dbReference>
<dbReference type="FunFam" id="1.10.150.570:FF:000001">
    <property type="entry name" value="tRNA uridine 5-carboxymethylaminomethyl modification enzyme MnmG"/>
    <property type="match status" value="1"/>
</dbReference>
<dbReference type="FunFam" id="3.50.50.60:FF:000094">
    <property type="entry name" value="tRNA uridine 5-carboxymethylaminomethyl modification enzyme MnmG"/>
    <property type="match status" value="1"/>
</dbReference>
<dbReference type="FunFam" id="3.50.50.60:FF:000119">
    <property type="entry name" value="tRNA uridine 5-carboxymethylaminomethyl modification enzyme MnmG"/>
    <property type="match status" value="1"/>
</dbReference>
<dbReference type="Gene3D" id="3.50.50.60">
    <property type="entry name" value="FAD/NAD(P)-binding domain"/>
    <property type="match status" value="2"/>
</dbReference>
<dbReference type="Gene3D" id="1.10.150.570">
    <property type="entry name" value="GidA associated domain, C-terminal subdomain"/>
    <property type="match status" value="1"/>
</dbReference>
<dbReference type="Gene3D" id="1.10.10.1800">
    <property type="entry name" value="tRNA uridine 5-carboxymethylaminomethyl modification enzyme MnmG/GidA"/>
    <property type="match status" value="1"/>
</dbReference>
<dbReference type="HAMAP" id="MF_00129">
    <property type="entry name" value="MnmG_GidA"/>
    <property type="match status" value="1"/>
</dbReference>
<dbReference type="InterPro" id="IPR036188">
    <property type="entry name" value="FAD/NAD-bd_sf"/>
</dbReference>
<dbReference type="InterPro" id="IPR049312">
    <property type="entry name" value="GIDA_C_N"/>
</dbReference>
<dbReference type="InterPro" id="IPR004416">
    <property type="entry name" value="MnmG"/>
</dbReference>
<dbReference type="InterPro" id="IPR002218">
    <property type="entry name" value="MnmG-rel"/>
</dbReference>
<dbReference type="InterPro" id="IPR020595">
    <property type="entry name" value="MnmG-rel_CS"/>
</dbReference>
<dbReference type="InterPro" id="IPR026904">
    <property type="entry name" value="MnmG_C"/>
</dbReference>
<dbReference type="InterPro" id="IPR047001">
    <property type="entry name" value="MnmG_C_subdom"/>
</dbReference>
<dbReference type="InterPro" id="IPR044920">
    <property type="entry name" value="MnmG_C_subdom_sf"/>
</dbReference>
<dbReference type="InterPro" id="IPR040131">
    <property type="entry name" value="MnmG_N"/>
</dbReference>
<dbReference type="NCBIfam" id="TIGR00136">
    <property type="entry name" value="mnmG_gidA"/>
    <property type="match status" value="1"/>
</dbReference>
<dbReference type="PANTHER" id="PTHR11806">
    <property type="entry name" value="GLUCOSE INHIBITED DIVISION PROTEIN A"/>
    <property type="match status" value="1"/>
</dbReference>
<dbReference type="PANTHER" id="PTHR11806:SF0">
    <property type="entry name" value="PROTEIN MTO1 HOMOLOG, MITOCHONDRIAL"/>
    <property type="match status" value="1"/>
</dbReference>
<dbReference type="Pfam" id="PF01134">
    <property type="entry name" value="GIDA"/>
    <property type="match status" value="1"/>
</dbReference>
<dbReference type="Pfam" id="PF21680">
    <property type="entry name" value="GIDA_C_1st"/>
    <property type="match status" value="1"/>
</dbReference>
<dbReference type="Pfam" id="PF13932">
    <property type="entry name" value="SAM_GIDA_C"/>
    <property type="match status" value="1"/>
</dbReference>
<dbReference type="SMART" id="SM01228">
    <property type="entry name" value="GIDA_assoc_3"/>
    <property type="match status" value="1"/>
</dbReference>
<dbReference type="SUPFAM" id="SSF51905">
    <property type="entry name" value="FAD/NAD(P)-binding domain"/>
    <property type="match status" value="1"/>
</dbReference>
<dbReference type="PROSITE" id="PS01280">
    <property type="entry name" value="GIDA_1"/>
    <property type="match status" value="1"/>
</dbReference>
<dbReference type="PROSITE" id="PS01281">
    <property type="entry name" value="GIDA_2"/>
    <property type="match status" value="1"/>
</dbReference>
<accession>Q55694</accession>
<feature type="chain" id="PRO_0000117199" description="tRNA uridine 5-carboxymethylaminomethyl modification enzyme MnmG">
    <location>
        <begin position="1"/>
        <end position="635"/>
    </location>
</feature>
<feature type="binding site" evidence="1">
    <location>
        <begin position="19"/>
        <end position="24"/>
    </location>
    <ligand>
        <name>FAD</name>
        <dbReference type="ChEBI" id="CHEBI:57692"/>
    </ligand>
</feature>
<feature type="binding site" evidence="1">
    <location>
        <begin position="280"/>
        <end position="294"/>
    </location>
    <ligand>
        <name>NAD(+)</name>
        <dbReference type="ChEBI" id="CHEBI:57540"/>
    </ligand>
</feature>
<name>MNMG_SYNY3</name>
<comment type="function">
    <text evidence="1">NAD-binding protein involved in the addition of a carboxymethylaminomethyl (cmnm) group at the wobble position (U34) of certain tRNAs, forming tRNA-cmnm(5)s(2)U34.</text>
</comment>
<comment type="cofactor">
    <cofactor evidence="1">
        <name>FAD</name>
        <dbReference type="ChEBI" id="CHEBI:57692"/>
    </cofactor>
</comment>
<comment type="subunit">
    <text evidence="1">Homodimer. Heterotetramer of two MnmE and two MnmG subunits.</text>
</comment>
<comment type="subcellular location">
    <subcellularLocation>
        <location evidence="1">Cytoplasm</location>
    </subcellularLocation>
</comment>
<comment type="similarity">
    <text evidence="1">Belongs to the MnmG family.</text>
</comment>
<keyword id="KW-0963">Cytoplasm</keyword>
<keyword id="KW-0274">FAD</keyword>
<keyword id="KW-0285">Flavoprotein</keyword>
<keyword id="KW-0520">NAD</keyword>
<keyword id="KW-1185">Reference proteome</keyword>
<keyword id="KW-0819">tRNA processing</keyword>
<protein>
    <recommendedName>
        <fullName evidence="1">tRNA uridine 5-carboxymethylaminomethyl modification enzyme MnmG</fullName>
    </recommendedName>
    <alternativeName>
        <fullName evidence="1">Glucose-inhibited division protein A</fullName>
    </alternativeName>
</protein>
<evidence type="ECO:0000255" key="1">
    <source>
        <dbReference type="HAMAP-Rule" id="MF_00129"/>
    </source>
</evidence>
<reference key="1">
    <citation type="journal article" date="1995" name="DNA Res.">
        <title>Sequence analysis of the genome of the unicellular cyanobacterium Synechocystis sp. strain PCC6803. I. Sequence features in the 1 Mb region from map positions 64% to 92% of the genome.</title>
        <authorList>
            <person name="Kaneko T."/>
            <person name="Tanaka A."/>
            <person name="Sato S."/>
            <person name="Kotani H."/>
            <person name="Sazuka T."/>
            <person name="Miyajima N."/>
            <person name="Sugiura M."/>
            <person name="Tabata S."/>
        </authorList>
    </citation>
    <scope>NUCLEOTIDE SEQUENCE [LARGE SCALE GENOMIC DNA]</scope>
    <source>
        <strain>ATCC 27184 / PCC 6803 / N-1</strain>
    </source>
</reference>
<reference key="2">
    <citation type="journal article" date="1996" name="DNA Res.">
        <title>Sequence analysis of the genome of the unicellular cyanobacterium Synechocystis sp. strain PCC6803. II. Sequence determination of the entire genome and assignment of potential protein-coding regions.</title>
        <authorList>
            <person name="Kaneko T."/>
            <person name="Sato S."/>
            <person name="Kotani H."/>
            <person name="Tanaka A."/>
            <person name="Asamizu E."/>
            <person name="Nakamura Y."/>
            <person name="Miyajima N."/>
            <person name="Hirosawa M."/>
            <person name="Sugiura M."/>
            <person name="Sasamoto S."/>
            <person name="Kimura T."/>
            <person name="Hosouchi T."/>
            <person name="Matsuno A."/>
            <person name="Muraki A."/>
            <person name="Nakazaki N."/>
            <person name="Naruo K."/>
            <person name="Okumura S."/>
            <person name="Shimpo S."/>
            <person name="Takeuchi C."/>
            <person name="Wada T."/>
            <person name="Watanabe A."/>
            <person name="Yamada M."/>
            <person name="Yasuda M."/>
            <person name="Tabata S."/>
        </authorList>
    </citation>
    <scope>NUCLEOTIDE SEQUENCE [LARGE SCALE GENOMIC DNA]</scope>
    <source>
        <strain>ATCC 27184 / PCC 6803 / Kazusa</strain>
    </source>
</reference>
<gene>
    <name evidence="1" type="primary">mnmG</name>
    <name evidence="1" type="synonym">gidA</name>
    <name type="ordered locus">sll0202</name>
</gene>